<accession>Q2JXZ7</accession>
<gene>
    <name evidence="1" type="primary">psbZ</name>
    <name type="ordered locus">CYA_0090</name>
</gene>
<reference key="1">
    <citation type="journal article" date="2007" name="ISME J.">
        <title>Population level functional diversity in a microbial community revealed by comparative genomic and metagenomic analyses.</title>
        <authorList>
            <person name="Bhaya D."/>
            <person name="Grossman A.R."/>
            <person name="Steunou A.-S."/>
            <person name="Khuri N."/>
            <person name="Cohan F.M."/>
            <person name="Hamamura N."/>
            <person name="Melendrez M.C."/>
            <person name="Bateson M.M."/>
            <person name="Ward D.M."/>
            <person name="Heidelberg J.F."/>
        </authorList>
    </citation>
    <scope>NUCLEOTIDE SEQUENCE [LARGE SCALE GENOMIC DNA]</scope>
    <source>
        <strain>JA-3-3Ab</strain>
    </source>
</reference>
<protein>
    <recommendedName>
        <fullName evidence="1">Photosystem II reaction center protein Z</fullName>
        <shortName evidence="1">PSII-Z</shortName>
    </recommendedName>
</protein>
<proteinExistence type="inferred from homology"/>
<keyword id="KW-0472">Membrane</keyword>
<keyword id="KW-0602">Photosynthesis</keyword>
<keyword id="KW-0604">Photosystem II</keyword>
<keyword id="KW-0674">Reaction center</keyword>
<keyword id="KW-0793">Thylakoid</keyword>
<keyword id="KW-0812">Transmembrane</keyword>
<keyword id="KW-1133">Transmembrane helix</keyword>
<comment type="function">
    <text evidence="1">May control the interaction of photosystem II (PSII) cores with the light-harvesting antenna, regulates electron flow through the 2 photosystem reaction centers. PSII is a light-driven water plastoquinone oxidoreductase, using light energy to abstract electrons from H(2)O, generating a proton gradient subsequently used for ATP formation.</text>
</comment>
<comment type="subunit">
    <text evidence="1">PSII is composed of 1 copy each of membrane proteins PsbA, PsbB, PsbC, PsbD, PsbE, PsbF, PsbH, PsbI, PsbJ, PsbK, PsbL, PsbM, PsbT, PsbX, PsbY, PsbZ, Psb30/Ycf12, peripheral proteins PsbO, CyanoQ (PsbQ), PsbU, PsbV and a large number of cofactors. It forms dimeric complexes.</text>
</comment>
<comment type="subcellular location">
    <subcellularLocation>
        <location evidence="1">Cellular thylakoid membrane</location>
        <topology evidence="1">Multi-pass membrane protein</topology>
    </subcellularLocation>
</comment>
<comment type="similarity">
    <text evidence="1">Belongs to the PsbZ family.</text>
</comment>
<sequence>MMLIFQIALLVLVLYSLLLVVAVPVLFSSASDWSRAKNVILVGSLLWVLMVIGVGVLSFFK</sequence>
<feature type="chain" id="PRO_1000056942" description="Photosystem II reaction center protein Z">
    <location>
        <begin position="1"/>
        <end position="61"/>
    </location>
</feature>
<feature type="transmembrane region" description="Helical" evidence="1">
    <location>
        <begin position="8"/>
        <end position="28"/>
    </location>
</feature>
<feature type="transmembrane region" description="Helical" evidence="1">
    <location>
        <begin position="41"/>
        <end position="61"/>
    </location>
</feature>
<dbReference type="EMBL" id="CP000239">
    <property type="protein sequence ID" value="ABC98320.1"/>
    <property type="molecule type" value="Genomic_DNA"/>
</dbReference>
<dbReference type="RefSeq" id="WP_011429012.1">
    <property type="nucleotide sequence ID" value="NC_007775.1"/>
</dbReference>
<dbReference type="SMR" id="Q2JXZ7"/>
<dbReference type="STRING" id="321327.CYA_0090"/>
<dbReference type="KEGG" id="cya:CYA_0090"/>
<dbReference type="HOGENOM" id="CLU_195286_1_0_3"/>
<dbReference type="OrthoDB" id="176095at1117"/>
<dbReference type="Proteomes" id="UP000008818">
    <property type="component" value="Chromosome"/>
</dbReference>
<dbReference type="GO" id="GO:0009539">
    <property type="term" value="C:photosystem II reaction center"/>
    <property type="evidence" value="ECO:0007669"/>
    <property type="project" value="InterPro"/>
</dbReference>
<dbReference type="GO" id="GO:0031676">
    <property type="term" value="C:plasma membrane-derived thylakoid membrane"/>
    <property type="evidence" value="ECO:0007669"/>
    <property type="project" value="UniProtKB-SubCell"/>
</dbReference>
<dbReference type="GO" id="GO:0015979">
    <property type="term" value="P:photosynthesis"/>
    <property type="evidence" value="ECO:0007669"/>
    <property type="project" value="UniProtKB-UniRule"/>
</dbReference>
<dbReference type="GO" id="GO:0042549">
    <property type="term" value="P:photosystem II stabilization"/>
    <property type="evidence" value="ECO:0007669"/>
    <property type="project" value="InterPro"/>
</dbReference>
<dbReference type="Gene3D" id="1.10.287.740">
    <property type="entry name" value="Photosystem II PsbZ, reaction centre"/>
    <property type="match status" value="1"/>
</dbReference>
<dbReference type="HAMAP" id="MF_00644">
    <property type="entry name" value="PSII_PsbZ"/>
    <property type="match status" value="1"/>
</dbReference>
<dbReference type="InterPro" id="IPR002644">
    <property type="entry name" value="PSII_PsbZ"/>
</dbReference>
<dbReference type="InterPro" id="IPR036512">
    <property type="entry name" value="PSII_PsbZ_sf"/>
</dbReference>
<dbReference type="NCBIfam" id="TIGR03043">
    <property type="entry name" value="PS_II_psbZ"/>
    <property type="match status" value="1"/>
</dbReference>
<dbReference type="PANTHER" id="PTHR34971">
    <property type="entry name" value="PHOTOSYSTEM II REACTION CENTER PROTEIN Z"/>
    <property type="match status" value="1"/>
</dbReference>
<dbReference type="PANTHER" id="PTHR34971:SF2">
    <property type="entry name" value="PHOTOSYSTEM II REACTION CENTER PROTEIN Z"/>
    <property type="match status" value="1"/>
</dbReference>
<dbReference type="Pfam" id="PF01737">
    <property type="entry name" value="Ycf9"/>
    <property type="match status" value="1"/>
</dbReference>
<dbReference type="SUPFAM" id="SSF161055">
    <property type="entry name" value="PsbZ-like"/>
    <property type="match status" value="1"/>
</dbReference>
<name>PSBZ_SYNJA</name>
<organism>
    <name type="scientific">Synechococcus sp. (strain JA-3-3Ab)</name>
    <name type="common">Cyanobacteria bacterium Yellowstone A-Prime</name>
    <dbReference type="NCBI Taxonomy" id="321327"/>
    <lineage>
        <taxon>Bacteria</taxon>
        <taxon>Bacillati</taxon>
        <taxon>Cyanobacteriota</taxon>
        <taxon>Cyanophyceae</taxon>
        <taxon>Synechococcales</taxon>
        <taxon>Synechococcaceae</taxon>
        <taxon>Synechococcus</taxon>
    </lineage>
</organism>
<evidence type="ECO:0000255" key="1">
    <source>
        <dbReference type="HAMAP-Rule" id="MF_00644"/>
    </source>
</evidence>